<proteinExistence type="evidence at protein level"/>
<comment type="function">
    <text evidence="2">S-layer large protein. May form the highly ordered outer sheath.</text>
</comment>
<comment type="subunit">
    <text evidence="5">The mushroom-shaped unit cells of the Sulfolobales' S-layers may consist of three SlaB subunits and six SlaA subunits.</text>
</comment>
<comment type="subcellular location">
    <subcellularLocation>
        <location evidence="2">Secreted</location>
        <location evidence="2">Cell wall</location>
        <location evidence="2">S-layer</location>
    </subcellularLocation>
</comment>
<comment type="similarity">
    <text evidence="4">Belongs to the Sulfolobales SlaA family.</text>
</comment>
<evidence type="ECO:0000255" key="1"/>
<evidence type="ECO:0000269" key="2">
    <source>
    </source>
</evidence>
<evidence type="ECO:0000303" key="3">
    <source>
    </source>
</evidence>
<evidence type="ECO:0000305" key="4"/>
<evidence type="ECO:0000305" key="5">
    <source>
    </source>
</evidence>
<evidence type="ECO:0000312" key="6">
    <source>
        <dbReference type="EMBL" id="ABP95960.1"/>
    </source>
</evidence>
<keyword id="KW-0134">Cell wall</keyword>
<keyword id="KW-1185">Reference proteome</keyword>
<keyword id="KW-0701">S-layer</keyword>
<keyword id="KW-0964">Secreted</keyword>
<keyword id="KW-0732">Signal</keyword>
<name>SLAA_METS5</name>
<gene>
    <name evidence="3" type="primary">slaA</name>
    <name evidence="6" type="ordered locus">Msed_1806</name>
</gene>
<sequence length="1360" mass="143557">MNKSAIRYLSLLLVFLMGGSFLAGITTFGQTSSTAGGVTISVSNEWVGNDTVVLVAIYNPNVPQSAQGAKYVAGNVTISAGGVTVPLISNDTSNASVVYYLNNGQHYFWFFITMTPVPTTSASSLSMTETLTINSTSTNVQLTNPYLSFTTPVGNVQTDGKAGVFQLTLPSSFPNQLIGEYGQTVYGGHKVNITDLYFFSGDKTITISYSTGASVTINNYLADSSNYAATLQTTESTVPLNSTWQVYFVDNIMQANPLVGGNGGFMITANGTQVSPVIQNVSYLAVKNGVYVNTTVFANNPVPNAQAMFGYGNVYYGNFTMYTSSIVTNKTYATLLSGNNYTPANVSFSQYKMLITSGLFTTNTPITIYLSDWIGNNASVSIKGTIKETTLQSITLSVQKGENLTVNDFNNISNYSVRRNIMVYVALQNITGSTYKTAMVSLPETYAGSGVFSLPTVLRIGSSPSITYSTSQVTITLPPYDFSNTSLLITATNDIGASYYYLGSNTVKNISTPGTISVGTPTLVPIPNVVSVANVTPVIELAYTEPNLAFGTATTLTVSGTSVKYNGVQVATDSVTAVLPNGTVISGNLNGLSITSLTSANGNGTFFIVVPSTVIKTFLGTHTYIPSGTELTFKIYDEFAAQTLSVTYKFTTVAPVIAIKTPTSTSFSSAETAYLPPLPYNVVPEKHYISVNVTDTLYAQSVPSSALQTTLKIIVENPAGQKVGNVVTTVVSETAANSGLFTGKIYYTVYENSSGYWLNINGQNITNLKNVVNGGLIVFEYTSPSSQSTVNATALLEPSPFTLSVSQTSANPGQHVNVSVNSPGLVESSNMKFTGSLIIYAQFAEWNGPGSQPTIAVSPITLKEVSAGSPVFGGTIVLGNSSVVSSGNLTSLITTPGYTVAPGSVVLVNANATIGPTSTSSSITPYYQQQSISINVVDINVSILNPSPASPFAKLEIELQSPLFNLLTHPAAGNYTSAGTSAGILEGILSTITTQQSQQLVTSTQLVTSPKTSFYYNNTIWVIETPMTLWSGTPGSYGIPIEVNLTDLLTVTHNVYAIHVVEVPNVTTGTVSLVSAYAVPSVSSNVAQLQINGLVPPVISVFFNGNNITQSASAAIPFPNTTAGELVNVTVYAPDAVNNLNVPGSGTTFNVTIVNTANGETTTLTLTQMTKIIGGVAVPTPYYTGLLKVVEPTVYTPGTPGVISASSGVVNKVLVNMNLVEGQYYNTQGLLQQLRMKASSYFYVGVIKLSVLVSHFTILSNGTPVTGMQVGKSYSLLFNVTNNGNVNETIYGTLEVLLNGTPVQPEIVAQITLAPGQSTQIGTLFTPTMPGSYTITFIPFQNNLLSIPYNQGLTEVVTAS</sequence>
<feature type="signal peptide" evidence="1">
    <location>
        <begin position="1"/>
        <end position="24"/>
    </location>
</feature>
<feature type="chain" id="PRO_0000444050" description="S-layer protein A">
    <location>
        <begin position="25"/>
        <end position="1360"/>
    </location>
</feature>
<reference key="1">
    <citation type="journal article" date="2008" name="Appl. Environ. Microbiol.">
        <title>The genome sequence of the metal-mobilizing, extremely thermoacidophilic archaeon Metallosphaera sedula provides insights into bioleaching-associated metabolism.</title>
        <authorList>
            <person name="Auernik K.S."/>
            <person name="Maezato Y."/>
            <person name="Blum P.H."/>
            <person name="Kelly R.M."/>
        </authorList>
    </citation>
    <scope>NUCLEOTIDE SEQUENCE [LARGE SCALE GENOMIC DNA]</scope>
    <source>
        <strain>ATCC 51363 / DSM 5348 / JCM 9185 / NBRC 15509 / TH2</strain>
    </source>
</reference>
<reference key="2">
    <citation type="journal article" date="2009" name="Mol. Microbiol.">
        <title>Acidianus, Sulfolobus and Metallosphaera surface layers: structure, composition and gene expression.</title>
        <authorList>
            <person name="Veith A."/>
            <person name="Klingl A."/>
            <person name="Zolghadr B."/>
            <person name="Lauber K."/>
            <person name="Mentele R."/>
            <person name="Lottspeich F."/>
            <person name="Rachel R."/>
            <person name="Albers S.V."/>
            <person name="Kletzin A."/>
        </authorList>
    </citation>
    <scope>IDENTIFICATION BY MASS SPECTROMETRY</scope>
    <scope>FUNCTION</scope>
    <scope>SUBUNIT</scope>
    <scope>SUBCELLULAR LOCATION</scope>
</reference>
<dbReference type="EMBL" id="CP000682">
    <property type="protein sequence ID" value="ABP95960.1"/>
    <property type="molecule type" value="Genomic_DNA"/>
</dbReference>
<dbReference type="RefSeq" id="WP_012021747.1">
    <property type="nucleotide sequence ID" value="NC_009440.1"/>
</dbReference>
<dbReference type="STRING" id="399549.Msed_1806"/>
<dbReference type="GeneID" id="5105369"/>
<dbReference type="KEGG" id="mse:Msed_1806"/>
<dbReference type="eggNOG" id="arCOG08800">
    <property type="taxonomic scope" value="Archaea"/>
</dbReference>
<dbReference type="HOGENOM" id="CLU_257028_0_0_2"/>
<dbReference type="Proteomes" id="UP000000242">
    <property type="component" value="Chromosome"/>
</dbReference>
<dbReference type="GO" id="GO:0005576">
    <property type="term" value="C:extracellular region"/>
    <property type="evidence" value="ECO:0007669"/>
    <property type="project" value="UniProtKB-KW"/>
</dbReference>
<dbReference type="GO" id="GO:0030115">
    <property type="term" value="C:S-layer"/>
    <property type="evidence" value="ECO:0007669"/>
    <property type="project" value="UniProtKB-SubCell"/>
</dbReference>
<dbReference type="InterPro" id="IPR053683">
    <property type="entry name" value="SlaA-like"/>
</dbReference>
<dbReference type="NCBIfam" id="NF040787">
    <property type="entry name" value="S-lay_SlaA_Mtsph"/>
    <property type="match status" value="1"/>
</dbReference>
<protein>
    <recommendedName>
        <fullName evidence="3">S-layer protein A</fullName>
    </recommendedName>
    <alternativeName>
        <fullName evidence="4">Surface layer large protein</fullName>
    </alternativeName>
</protein>
<accession>A4YHQ8</accession>
<organism>
    <name type="scientific">Metallosphaera sedula (strain ATCC 51363 / DSM 5348 / JCM 9185 / NBRC 15509 / TH2)</name>
    <dbReference type="NCBI Taxonomy" id="399549"/>
    <lineage>
        <taxon>Archaea</taxon>
        <taxon>Thermoproteota</taxon>
        <taxon>Thermoprotei</taxon>
        <taxon>Sulfolobales</taxon>
        <taxon>Sulfolobaceae</taxon>
        <taxon>Metallosphaera</taxon>
    </lineage>
</organism>